<dbReference type="EC" id="1.8.4.11"/>
<dbReference type="EMBL" id="BA000017">
    <property type="protein sequence ID" value="BAB57586.1"/>
    <property type="molecule type" value="Genomic_DNA"/>
</dbReference>
<dbReference type="SMR" id="P65445"/>
<dbReference type="KEGG" id="sav:SAV1424"/>
<dbReference type="HOGENOM" id="CLU_031040_10_1_9"/>
<dbReference type="PhylomeDB" id="P65445"/>
<dbReference type="Proteomes" id="UP000002481">
    <property type="component" value="Chromosome"/>
</dbReference>
<dbReference type="GO" id="GO:0033744">
    <property type="term" value="F:L-methionine:thioredoxin-disulfide S-oxidoreductase activity"/>
    <property type="evidence" value="ECO:0007669"/>
    <property type="project" value="RHEA"/>
</dbReference>
<dbReference type="GO" id="GO:0008113">
    <property type="term" value="F:peptide-methionine (S)-S-oxide reductase activity"/>
    <property type="evidence" value="ECO:0007669"/>
    <property type="project" value="UniProtKB-UniRule"/>
</dbReference>
<dbReference type="GO" id="GO:0036211">
    <property type="term" value="P:protein modification process"/>
    <property type="evidence" value="ECO:0007669"/>
    <property type="project" value="UniProtKB-UniRule"/>
</dbReference>
<dbReference type="FunFam" id="3.30.1060.10:FF:000003">
    <property type="entry name" value="Peptide methionine sulfoxide reductase MsrA"/>
    <property type="match status" value="1"/>
</dbReference>
<dbReference type="Gene3D" id="3.30.1060.10">
    <property type="entry name" value="Peptide methionine sulphoxide reductase MsrA"/>
    <property type="match status" value="1"/>
</dbReference>
<dbReference type="HAMAP" id="MF_01401">
    <property type="entry name" value="MsrA"/>
    <property type="match status" value="1"/>
</dbReference>
<dbReference type="InterPro" id="IPR002569">
    <property type="entry name" value="Met_Sox_Rdtase_MsrA_dom"/>
</dbReference>
<dbReference type="InterPro" id="IPR036509">
    <property type="entry name" value="Met_Sox_Rdtase_MsrA_sf"/>
</dbReference>
<dbReference type="NCBIfam" id="TIGR00401">
    <property type="entry name" value="msrA"/>
    <property type="match status" value="1"/>
</dbReference>
<dbReference type="PANTHER" id="PTHR43774">
    <property type="entry name" value="PEPTIDE METHIONINE SULFOXIDE REDUCTASE"/>
    <property type="match status" value="1"/>
</dbReference>
<dbReference type="PANTHER" id="PTHR43774:SF1">
    <property type="entry name" value="PEPTIDE METHIONINE SULFOXIDE REDUCTASE MSRA 2"/>
    <property type="match status" value="1"/>
</dbReference>
<dbReference type="Pfam" id="PF01625">
    <property type="entry name" value="PMSR"/>
    <property type="match status" value="1"/>
</dbReference>
<dbReference type="SUPFAM" id="SSF55068">
    <property type="entry name" value="Peptide methionine sulfoxide reductase"/>
    <property type="match status" value="1"/>
</dbReference>
<feature type="chain" id="PRO_0000138582" description="Peptide methionine sulfoxide reductase MsrA 2">
    <location>
        <begin position="1"/>
        <end position="177"/>
    </location>
</feature>
<feature type="active site" evidence="1">
    <location>
        <position position="12"/>
    </location>
</feature>
<gene>
    <name type="primary">msrA2</name>
    <name type="ordered locus">SAV1424</name>
</gene>
<evidence type="ECO:0000250" key="1"/>
<evidence type="ECO:0000305" key="2"/>
<accession>P65445</accession>
<accession>Q99U63</accession>
<organism>
    <name type="scientific">Staphylococcus aureus (strain Mu50 / ATCC 700699)</name>
    <dbReference type="NCBI Taxonomy" id="158878"/>
    <lineage>
        <taxon>Bacteria</taxon>
        <taxon>Bacillati</taxon>
        <taxon>Bacillota</taxon>
        <taxon>Bacilli</taxon>
        <taxon>Bacillales</taxon>
        <taxon>Staphylococcaceae</taxon>
        <taxon>Staphylococcus</taxon>
    </lineage>
</organism>
<sequence>MTKEYATLAGGCFWCMVKPFTSYPGIKSVVSGYSGGHVDNPTYEQVCTNKTGHVEAVQITFDPEVTSFENILDIYFKTFDPTDDQGQFFDRGESYQPVIFYHDEHQKKAAEFKKQQLNEQGIFKKPVITPIKPYKNFYPAEDYHQDYYKKNPVHYYQYQRGSGRKAFIESHWGNQNA</sequence>
<protein>
    <recommendedName>
        <fullName>Peptide methionine sulfoxide reductase MsrA 2</fullName>
        <shortName>Protein-methionine-S-oxide reductase 2</shortName>
        <ecNumber>1.8.4.11</ecNumber>
    </recommendedName>
    <alternativeName>
        <fullName>Peptide-methionine (S)-S-oxide reductase 2</fullName>
        <shortName>Peptide Met(O) reductase 2</shortName>
    </alternativeName>
</protein>
<keyword id="KW-0560">Oxidoreductase</keyword>
<reference key="1">
    <citation type="journal article" date="2001" name="Lancet">
        <title>Whole genome sequencing of meticillin-resistant Staphylococcus aureus.</title>
        <authorList>
            <person name="Kuroda M."/>
            <person name="Ohta T."/>
            <person name="Uchiyama I."/>
            <person name="Baba T."/>
            <person name="Yuzawa H."/>
            <person name="Kobayashi I."/>
            <person name="Cui L."/>
            <person name="Oguchi A."/>
            <person name="Aoki K."/>
            <person name="Nagai Y."/>
            <person name="Lian J.-Q."/>
            <person name="Ito T."/>
            <person name="Kanamori M."/>
            <person name="Matsumaru H."/>
            <person name="Maruyama A."/>
            <person name="Murakami H."/>
            <person name="Hosoyama A."/>
            <person name="Mizutani-Ui Y."/>
            <person name="Takahashi N.K."/>
            <person name="Sawano T."/>
            <person name="Inoue R."/>
            <person name="Kaito C."/>
            <person name="Sekimizu K."/>
            <person name="Hirakawa H."/>
            <person name="Kuhara S."/>
            <person name="Goto S."/>
            <person name="Yabuzaki J."/>
            <person name="Kanehisa M."/>
            <person name="Yamashita A."/>
            <person name="Oshima K."/>
            <person name="Furuya K."/>
            <person name="Yoshino C."/>
            <person name="Shiba T."/>
            <person name="Hattori M."/>
            <person name="Ogasawara N."/>
            <person name="Hayashi H."/>
            <person name="Hiramatsu K."/>
        </authorList>
    </citation>
    <scope>NUCLEOTIDE SEQUENCE [LARGE SCALE GENOMIC DNA]</scope>
    <source>
        <strain>Mu50 / ATCC 700699</strain>
    </source>
</reference>
<name>MSRA2_STAAM</name>
<proteinExistence type="inferred from homology"/>
<comment type="function">
    <text evidence="1">Has an important function as a repair enzyme for proteins that have been inactivated by oxidation. Catalyzes the reversible oxidation-reduction of methionine sulfoxide in proteins to methionine (By similarity).</text>
</comment>
<comment type="catalytic activity">
    <reaction>
        <text>L-methionyl-[protein] + [thioredoxin]-disulfide + H2O = L-methionyl-(S)-S-oxide-[protein] + [thioredoxin]-dithiol</text>
        <dbReference type="Rhea" id="RHEA:14217"/>
        <dbReference type="Rhea" id="RHEA-COMP:10698"/>
        <dbReference type="Rhea" id="RHEA-COMP:10700"/>
        <dbReference type="Rhea" id="RHEA-COMP:12313"/>
        <dbReference type="Rhea" id="RHEA-COMP:12315"/>
        <dbReference type="ChEBI" id="CHEBI:15377"/>
        <dbReference type="ChEBI" id="CHEBI:16044"/>
        <dbReference type="ChEBI" id="CHEBI:29950"/>
        <dbReference type="ChEBI" id="CHEBI:44120"/>
        <dbReference type="ChEBI" id="CHEBI:50058"/>
        <dbReference type="EC" id="1.8.4.11"/>
    </reaction>
</comment>
<comment type="catalytic activity">
    <reaction>
        <text>[thioredoxin]-disulfide + L-methionine + H2O = L-methionine (S)-S-oxide + [thioredoxin]-dithiol</text>
        <dbReference type="Rhea" id="RHEA:19993"/>
        <dbReference type="Rhea" id="RHEA-COMP:10698"/>
        <dbReference type="Rhea" id="RHEA-COMP:10700"/>
        <dbReference type="ChEBI" id="CHEBI:15377"/>
        <dbReference type="ChEBI" id="CHEBI:29950"/>
        <dbReference type="ChEBI" id="CHEBI:50058"/>
        <dbReference type="ChEBI" id="CHEBI:57844"/>
        <dbReference type="ChEBI" id="CHEBI:58772"/>
        <dbReference type="EC" id="1.8.4.11"/>
    </reaction>
</comment>
<comment type="similarity">
    <text evidence="2">Belongs to the MsrA Met sulfoxide reductase family.</text>
</comment>